<dbReference type="EMBL" id="LT708304">
    <property type="protein sequence ID" value="SIU02115.1"/>
    <property type="molecule type" value="Genomic_DNA"/>
</dbReference>
<dbReference type="EMBL" id="U15140">
    <property type="protein sequence ID" value="AAB17600.1"/>
    <property type="molecule type" value="Genomic_DNA"/>
</dbReference>
<dbReference type="RefSeq" id="NP_857127.1">
    <property type="nucleotide sequence ID" value="NC_002945.3"/>
</dbReference>
<dbReference type="RefSeq" id="WP_003418354.1">
    <property type="nucleotide sequence ID" value="NC_002945.4"/>
</dbReference>
<dbReference type="SMR" id="P45811"/>
<dbReference type="GeneID" id="45427447"/>
<dbReference type="KEGG" id="mbo:BQ2027_MB3487C"/>
<dbReference type="PATRIC" id="fig|233413.5.peg.3824"/>
<dbReference type="Proteomes" id="UP000001419">
    <property type="component" value="Chromosome"/>
</dbReference>
<dbReference type="GO" id="GO:0015935">
    <property type="term" value="C:small ribosomal subunit"/>
    <property type="evidence" value="ECO:0007669"/>
    <property type="project" value="InterPro"/>
</dbReference>
<dbReference type="GO" id="GO:0019843">
    <property type="term" value="F:rRNA binding"/>
    <property type="evidence" value="ECO:0007669"/>
    <property type="project" value="UniProtKB-UniRule"/>
</dbReference>
<dbReference type="GO" id="GO:0003735">
    <property type="term" value="F:structural constituent of ribosome"/>
    <property type="evidence" value="ECO:0007669"/>
    <property type="project" value="InterPro"/>
</dbReference>
<dbReference type="GO" id="GO:0042274">
    <property type="term" value="P:ribosomal small subunit biogenesis"/>
    <property type="evidence" value="ECO:0007669"/>
    <property type="project" value="TreeGrafter"/>
</dbReference>
<dbReference type="GO" id="GO:0006412">
    <property type="term" value="P:translation"/>
    <property type="evidence" value="ECO:0007669"/>
    <property type="project" value="UniProtKB-UniRule"/>
</dbReference>
<dbReference type="CDD" id="cd00165">
    <property type="entry name" value="S4"/>
    <property type="match status" value="1"/>
</dbReference>
<dbReference type="FunFam" id="3.10.290.10:FF:000001">
    <property type="entry name" value="30S ribosomal protein S4"/>
    <property type="match status" value="1"/>
</dbReference>
<dbReference type="Gene3D" id="1.10.1050.10">
    <property type="entry name" value="Ribosomal Protein S4 Delta 41, Chain A, domain 1"/>
    <property type="match status" value="1"/>
</dbReference>
<dbReference type="Gene3D" id="3.10.290.10">
    <property type="entry name" value="RNA-binding S4 domain"/>
    <property type="match status" value="1"/>
</dbReference>
<dbReference type="HAMAP" id="MF_01306_B">
    <property type="entry name" value="Ribosomal_uS4_B"/>
    <property type="match status" value="1"/>
</dbReference>
<dbReference type="InterPro" id="IPR022801">
    <property type="entry name" value="Ribosomal_uS4"/>
</dbReference>
<dbReference type="InterPro" id="IPR005709">
    <property type="entry name" value="Ribosomal_uS4_bac-type"/>
</dbReference>
<dbReference type="InterPro" id="IPR018079">
    <property type="entry name" value="Ribosomal_uS4_CS"/>
</dbReference>
<dbReference type="InterPro" id="IPR001912">
    <property type="entry name" value="Ribosomal_uS4_N"/>
</dbReference>
<dbReference type="InterPro" id="IPR002942">
    <property type="entry name" value="S4_RNA-bd"/>
</dbReference>
<dbReference type="InterPro" id="IPR036986">
    <property type="entry name" value="S4_RNA-bd_sf"/>
</dbReference>
<dbReference type="NCBIfam" id="NF003717">
    <property type="entry name" value="PRK05327.1"/>
    <property type="match status" value="1"/>
</dbReference>
<dbReference type="NCBIfam" id="TIGR01017">
    <property type="entry name" value="rpsD_bact"/>
    <property type="match status" value="1"/>
</dbReference>
<dbReference type="PANTHER" id="PTHR11831">
    <property type="entry name" value="30S 40S RIBOSOMAL PROTEIN"/>
    <property type="match status" value="1"/>
</dbReference>
<dbReference type="PANTHER" id="PTHR11831:SF4">
    <property type="entry name" value="SMALL RIBOSOMAL SUBUNIT PROTEIN US4M"/>
    <property type="match status" value="1"/>
</dbReference>
<dbReference type="Pfam" id="PF00163">
    <property type="entry name" value="Ribosomal_S4"/>
    <property type="match status" value="1"/>
</dbReference>
<dbReference type="Pfam" id="PF01479">
    <property type="entry name" value="S4"/>
    <property type="match status" value="1"/>
</dbReference>
<dbReference type="SMART" id="SM01390">
    <property type="entry name" value="Ribosomal_S4"/>
    <property type="match status" value="1"/>
</dbReference>
<dbReference type="SMART" id="SM00363">
    <property type="entry name" value="S4"/>
    <property type="match status" value="1"/>
</dbReference>
<dbReference type="SUPFAM" id="SSF55174">
    <property type="entry name" value="Alpha-L RNA-binding motif"/>
    <property type="match status" value="1"/>
</dbReference>
<dbReference type="PROSITE" id="PS00632">
    <property type="entry name" value="RIBOSOMAL_S4"/>
    <property type="match status" value="1"/>
</dbReference>
<dbReference type="PROSITE" id="PS50889">
    <property type="entry name" value="S4"/>
    <property type="match status" value="1"/>
</dbReference>
<comment type="function">
    <text evidence="1">One of the primary rRNA binding proteins, it binds directly to 16S rRNA where it nucleates assembly of the body of the 30S subunit.</text>
</comment>
<comment type="function">
    <text evidence="1">With S5 and S12 plays an important role in translational accuracy.</text>
</comment>
<comment type="subunit">
    <text evidence="1">Part of the 30S ribosomal subunit. Contacts protein S5. The interaction surface between S4 and S5 is involved in control of translational fidelity (By similarity).</text>
</comment>
<comment type="similarity">
    <text evidence="3">Belongs to the universal ribosomal protein uS4 family.</text>
</comment>
<proteinExistence type="evidence at protein level"/>
<protein>
    <recommendedName>
        <fullName evidence="3">Small ribosomal subunit protein uS4</fullName>
    </recommendedName>
    <alternativeName>
        <fullName>30S ribosomal protein S4</fullName>
    </alternativeName>
</protein>
<evidence type="ECO:0000250" key="1"/>
<evidence type="ECO:0000269" key="2">
    <source>
    </source>
</evidence>
<evidence type="ECO:0000305" key="3"/>
<organism>
    <name type="scientific">Mycobacterium bovis (strain ATCC BAA-935 / AF2122/97)</name>
    <dbReference type="NCBI Taxonomy" id="233413"/>
    <lineage>
        <taxon>Bacteria</taxon>
        <taxon>Bacillati</taxon>
        <taxon>Actinomycetota</taxon>
        <taxon>Actinomycetes</taxon>
        <taxon>Mycobacteriales</taxon>
        <taxon>Mycobacteriaceae</taxon>
        <taxon>Mycobacterium</taxon>
        <taxon>Mycobacterium tuberculosis complex</taxon>
    </lineage>
</organism>
<reference key="1">
    <citation type="journal article" date="2003" name="Proc. Natl. Acad. Sci. U.S.A.">
        <title>The complete genome sequence of Mycobacterium bovis.</title>
        <authorList>
            <person name="Garnier T."/>
            <person name="Eiglmeier K."/>
            <person name="Camus J.-C."/>
            <person name="Medina N."/>
            <person name="Mansoor H."/>
            <person name="Pryor M."/>
            <person name="Duthoy S."/>
            <person name="Grondin S."/>
            <person name="Lacroix C."/>
            <person name="Monsempe C."/>
            <person name="Simon S."/>
            <person name="Harris B."/>
            <person name="Atkin R."/>
            <person name="Doggett J."/>
            <person name="Mayes R."/>
            <person name="Keating L."/>
            <person name="Wheeler P.R."/>
            <person name="Parkhill J."/>
            <person name="Barrell B.G."/>
            <person name="Cole S.T."/>
            <person name="Gordon S.V."/>
            <person name="Hewinson R.G."/>
        </authorList>
    </citation>
    <scope>NUCLEOTIDE SEQUENCE [LARGE SCALE GENOMIC DNA]</scope>
    <source>
        <strain>ATCC BAA-935 / AF2122/97</strain>
    </source>
</reference>
<reference key="2">
    <citation type="journal article" date="2017" name="Genome Announc.">
        <title>Updated reference genome sequence and annotation of Mycobacterium bovis AF2122/97.</title>
        <authorList>
            <person name="Malone K.M."/>
            <person name="Farrell D."/>
            <person name="Stuber T.P."/>
            <person name="Schubert O.T."/>
            <person name="Aebersold R."/>
            <person name="Robbe-Austerman S."/>
            <person name="Gordon S.V."/>
        </authorList>
    </citation>
    <scope>NUCLEOTIDE SEQUENCE [LARGE SCALE GENOMIC DNA]</scope>
    <scope>GENOME REANNOTATION</scope>
    <source>
        <strain>ATCC BAA-935 / AF2122/97</strain>
    </source>
</reference>
<reference key="3">
    <citation type="journal article" date="1996" name="Gene">
        <title>Overproduction of mycobacterial ribosomal protein S13 induces catalase/peroxidase activity and hypersensitivity to isoniazid in Mycobacterium smegmatis.</title>
        <authorList>
            <person name="Dubnau E."/>
            <person name="Soares S."/>
            <person name="Huang T.J."/>
            <person name="Jacobs W.R. Jr."/>
        </authorList>
    </citation>
    <scope>NUCLEOTIDE SEQUENCE [GENOMIC DNA] OF 1-132</scope>
    <source>
        <strain>BCG</strain>
    </source>
</reference>
<reference key="4">
    <citation type="journal article" date="1993" name="FEBS Lett.">
        <title>Isolation and amino acid sequence of the 30S ribosomal protein S19 from Mycobacterium bovis BCG.</title>
        <authorList>
            <person name="Ohara N."/>
            <person name="Kimura M."/>
            <person name="Higashi Y."/>
            <person name="Yamada T."/>
        </authorList>
    </citation>
    <scope>PROTEIN SEQUENCE OF 2-5</scope>
    <source>
        <strain>BCG</strain>
    </source>
</reference>
<feature type="initiator methionine" description="Removed" evidence="2">
    <location>
        <position position="1"/>
    </location>
</feature>
<feature type="chain" id="PRO_0000132411" description="Small ribosomal subunit protein uS4">
    <location>
        <begin position="2"/>
        <end position="201"/>
    </location>
</feature>
<feature type="domain" description="S4 RNA-binding">
    <location>
        <begin position="91"/>
        <end position="157"/>
    </location>
</feature>
<gene>
    <name type="primary">rpsD</name>
    <name type="ordered locus">BQ2027_MB3487C</name>
</gene>
<accession>P45811</accession>
<accession>A0A1R3Y5X1</accession>
<accession>X2BNV6</accession>
<sequence>MARYTGPVTRKSRRLRTDLVGGDQAFEKRPYPPGQHGRARIKESEYLLQLQEKQKARFTYGVMEKQFRRYYEEAVRQPGKTGEELLKILESRLDNVIYRAGLARTRRMARQLVSHGHFNVNGVHVNVPSYRVSQYDIVDVRDKSLNTVPFQIARETAGERPIPSWLQVVGERQRVLIHQLPERAQIDVPLTEQLIVEYYSK</sequence>
<keyword id="KW-0903">Direct protein sequencing</keyword>
<keyword id="KW-1185">Reference proteome</keyword>
<keyword id="KW-0687">Ribonucleoprotein</keyword>
<keyword id="KW-0689">Ribosomal protein</keyword>
<keyword id="KW-0694">RNA-binding</keyword>
<keyword id="KW-0699">rRNA-binding</keyword>
<name>RS4_MYCBO</name>